<name>PP15_ARATH</name>
<dbReference type="EC" id="3.1.3.16" evidence="3"/>
<dbReference type="EMBL" id="M93412">
    <property type="protein sequence ID" value="AAA32840.1"/>
    <property type="molecule type" value="mRNA"/>
</dbReference>
<dbReference type="EMBL" id="AL096859">
    <property type="protein sequence ID" value="CAB51183.1"/>
    <property type="molecule type" value="Genomic_DNA"/>
</dbReference>
<dbReference type="EMBL" id="CP002686">
    <property type="protein sequence ID" value="AEE78208.1"/>
    <property type="molecule type" value="Genomic_DNA"/>
</dbReference>
<dbReference type="EMBL" id="BT024715">
    <property type="protein sequence ID" value="ABD59053.1"/>
    <property type="molecule type" value="mRNA"/>
</dbReference>
<dbReference type="EMBL" id="AK220755">
    <property type="protein sequence ID" value="BAD93940.1"/>
    <property type="molecule type" value="mRNA"/>
</dbReference>
<dbReference type="EMBL" id="AK227072">
    <property type="protein sequence ID" value="BAE99129.1"/>
    <property type="molecule type" value="mRNA"/>
</dbReference>
<dbReference type="EMBL" id="Z12162">
    <property type="protein sequence ID" value="CAA78152.1"/>
    <property type="molecule type" value="mRNA"/>
</dbReference>
<dbReference type="PIR" id="S25532">
    <property type="entry name" value="S25532"/>
</dbReference>
<dbReference type="PIR" id="S31089">
    <property type="entry name" value="S31089"/>
</dbReference>
<dbReference type="RefSeq" id="NP_190266.1">
    <property type="nucleotide sequence ID" value="NM_114549.4"/>
</dbReference>
<dbReference type="SMR" id="P48485"/>
<dbReference type="BioGRID" id="9155">
    <property type="interactions" value="3"/>
</dbReference>
<dbReference type="FunCoup" id="P48485">
    <property type="interactions" value="3566"/>
</dbReference>
<dbReference type="IntAct" id="P48485">
    <property type="interactions" value="1"/>
</dbReference>
<dbReference type="STRING" id="3702.P48485"/>
<dbReference type="iPTMnet" id="P48485"/>
<dbReference type="PaxDb" id="3702-AT3G46820.1"/>
<dbReference type="ProteomicsDB" id="249425"/>
<dbReference type="EnsemblPlants" id="AT3G46820.1">
    <property type="protein sequence ID" value="AT3G46820.1"/>
    <property type="gene ID" value="AT3G46820"/>
</dbReference>
<dbReference type="GeneID" id="823835"/>
<dbReference type="Gramene" id="AT3G46820.1">
    <property type="protein sequence ID" value="AT3G46820.1"/>
    <property type="gene ID" value="AT3G46820"/>
</dbReference>
<dbReference type="KEGG" id="ath:AT3G46820"/>
<dbReference type="Araport" id="AT3G46820"/>
<dbReference type="TAIR" id="AT3G46820">
    <property type="gene designation" value="TOPP5"/>
</dbReference>
<dbReference type="eggNOG" id="KOG0374">
    <property type="taxonomic scope" value="Eukaryota"/>
</dbReference>
<dbReference type="HOGENOM" id="CLU_004962_0_0_1"/>
<dbReference type="InParanoid" id="P48485"/>
<dbReference type="OMA" id="GTKQAMM"/>
<dbReference type="OrthoDB" id="1930084at2759"/>
<dbReference type="PhylomeDB" id="P48485"/>
<dbReference type="PRO" id="PR:P48485"/>
<dbReference type="Proteomes" id="UP000006548">
    <property type="component" value="Chromosome 3"/>
</dbReference>
<dbReference type="ExpressionAtlas" id="P48485">
    <property type="expression patterns" value="baseline and differential"/>
</dbReference>
<dbReference type="GO" id="GO:0005634">
    <property type="term" value="C:nucleus"/>
    <property type="evidence" value="ECO:0007669"/>
    <property type="project" value="UniProtKB-SubCell"/>
</dbReference>
<dbReference type="GO" id="GO:0000164">
    <property type="term" value="C:protein phosphatase type 1 complex"/>
    <property type="evidence" value="ECO:0000250"/>
    <property type="project" value="TAIR"/>
</dbReference>
<dbReference type="GO" id="GO:0046872">
    <property type="term" value="F:metal ion binding"/>
    <property type="evidence" value="ECO:0007669"/>
    <property type="project" value="UniProtKB-KW"/>
</dbReference>
<dbReference type="GO" id="GO:0004722">
    <property type="term" value="F:protein serine/threonine phosphatase activity"/>
    <property type="evidence" value="ECO:0000314"/>
    <property type="project" value="TAIR"/>
</dbReference>
<dbReference type="GO" id="GO:0071215">
    <property type="term" value="P:cellular response to abscisic acid stimulus"/>
    <property type="evidence" value="ECO:0000316"/>
    <property type="project" value="TAIR"/>
</dbReference>
<dbReference type="CDD" id="cd07414">
    <property type="entry name" value="MPP_PP1_PPKL"/>
    <property type="match status" value="1"/>
</dbReference>
<dbReference type="FunFam" id="3.60.21.10:FF:000212">
    <property type="entry name" value="Serine/threonine-protein phosphatase"/>
    <property type="match status" value="1"/>
</dbReference>
<dbReference type="Gene3D" id="3.60.21.10">
    <property type="match status" value="1"/>
</dbReference>
<dbReference type="InterPro" id="IPR004843">
    <property type="entry name" value="Calcineurin-like_PHP_ApaH"/>
</dbReference>
<dbReference type="InterPro" id="IPR029052">
    <property type="entry name" value="Metallo-depent_PP-like"/>
</dbReference>
<dbReference type="InterPro" id="IPR050341">
    <property type="entry name" value="PP1_catalytic_subunit"/>
</dbReference>
<dbReference type="InterPro" id="IPR006186">
    <property type="entry name" value="Ser/Thr-sp_prot-phosphatase"/>
</dbReference>
<dbReference type="InterPro" id="IPR031675">
    <property type="entry name" value="STPPase_N"/>
</dbReference>
<dbReference type="PANTHER" id="PTHR11668">
    <property type="entry name" value="SERINE/THREONINE PROTEIN PHOSPHATASE"/>
    <property type="match status" value="1"/>
</dbReference>
<dbReference type="PANTHER" id="PTHR11668:SF511">
    <property type="entry name" value="SERINE_THREONINE-PROTEIN PHOSPHATASE PP1 ISOZYME 2-RELATED"/>
    <property type="match status" value="1"/>
</dbReference>
<dbReference type="Pfam" id="PF00149">
    <property type="entry name" value="Metallophos"/>
    <property type="match status" value="1"/>
</dbReference>
<dbReference type="Pfam" id="PF16891">
    <property type="entry name" value="STPPase_N"/>
    <property type="match status" value="1"/>
</dbReference>
<dbReference type="PRINTS" id="PR00114">
    <property type="entry name" value="STPHPHTASE"/>
</dbReference>
<dbReference type="SMART" id="SM00156">
    <property type="entry name" value="PP2Ac"/>
    <property type="match status" value="1"/>
</dbReference>
<dbReference type="SUPFAM" id="SSF56300">
    <property type="entry name" value="Metallo-dependent phosphatases"/>
    <property type="match status" value="1"/>
</dbReference>
<dbReference type="PROSITE" id="PS00125">
    <property type="entry name" value="SER_THR_PHOSPHATASE"/>
    <property type="match status" value="1"/>
</dbReference>
<evidence type="ECO:0000250" key="1"/>
<evidence type="ECO:0000269" key="2">
    <source>
    </source>
</evidence>
<evidence type="ECO:0000269" key="3">
    <source>
    </source>
</evidence>
<evidence type="ECO:0000303" key="4">
    <source>
    </source>
</evidence>
<evidence type="ECO:0000305" key="5"/>
<evidence type="ECO:0000312" key="6">
    <source>
        <dbReference type="Araport" id="AT3G46820"/>
    </source>
</evidence>
<evidence type="ECO:0000312" key="7">
    <source>
        <dbReference type="EMBL" id="CAB51183.1"/>
    </source>
</evidence>
<evidence type="ECO:0007744" key="8">
    <source>
    </source>
</evidence>
<gene>
    <name evidence="4" type="primary">TOPP5</name>
    <name evidence="6" type="ordered locus">At3g46820</name>
    <name evidence="7" type="ORF">T6H20.150</name>
</gene>
<sequence length="312" mass="35519">MAQQGQGSMDPAVLDDIIRRLLDYRNPKAGTKQAMLNDSEIRQLCFVSREIFLQQPCLLELAAPVKICGDIHGQYSDLLRLFEYGGFPPAANYLFLGDYVDRGKQSLETICLLLAYKIKYPENFFLLRGNHECASINRIYGFYDECKRRFNVKLWKVFTDTFNCLPVAAVIDEKILCMHGGLSPELINVEQIKNIERPTDVPDAGLLCDLLWSDPSKDVKGWGMNDRGVSYTFGADKVAEFLIKNDMDLVCRAHQVVEDGYEFFADRQLVTMFSAPNYCGEFDNAGALMSVDESLMCSFQILKPVDRRSRFF</sequence>
<comment type="function">
    <text evidence="3">Serine/threonine-protein phosphatase that possesses phosphatase activity toward para-nitrophenyl phosphate (pNPP) in vitro.</text>
</comment>
<comment type="catalytic activity">
    <reaction evidence="3">
        <text>O-phospho-L-seryl-[protein] + H2O = L-seryl-[protein] + phosphate</text>
        <dbReference type="Rhea" id="RHEA:20629"/>
        <dbReference type="Rhea" id="RHEA-COMP:9863"/>
        <dbReference type="Rhea" id="RHEA-COMP:11604"/>
        <dbReference type="ChEBI" id="CHEBI:15377"/>
        <dbReference type="ChEBI" id="CHEBI:29999"/>
        <dbReference type="ChEBI" id="CHEBI:43474"/>
        <dbReference type="ChEBI" id="CHEBI:83421"/>
        <dbReference type="EC" id="3.1.3.16"/>
    </reaction>
</comment>
<comment type="catalytic activity">
    <reaction evidence="3">
        <text>O-phospho-L-threonyl-[protein] + H2O = L-threonyl-[protein] + phosphate</text>
        <dbReference type="Rhea" id="RHEA:47004"/>
        <dbReference type="Rhea" id="RHEA-COMP:11060"/>
        <dbReference type="Rhea" id="RHEA-COMP:11605"/>
        <dbReference type="ChEBI" id="CHEBI:15377"/>
        <dbReference type="ChEBI" id="CHEBI:30013"/>
        <dbReference type="ChEBI" id="CHEBI:43474"/>
        <dbReference type="ChEBI" id="CHEBI:61977"/>
        <dbReference type="EC" id="3.1.3.16"/>
    </reaction>
</comment>
<comment type="cofactor">
    <cofactor evidence="1">
        <name>Mn(2+)</name>
        <dbReference type="ChEBI" id="CHEBI:29035"/>
    </cofactor>
    <text evidence="1">Binds 2 manganese ions per subunit.</text>
</comment>
<comment type="activity regulation">
    <text evidence="3">Phosphatase activity is strongly reduced by the protein phosphatase inhibitor 2 (I-2).</text>
</comment>
<comment type="subcellular location">
    <subcellularLocation>
        <location evidence="2">Nucleus</location>
    </subcellularLocation>
    <subcellularLocation>
        <location evidence="2">Cytoplasm</location>
    </subcellularLocation>
</comment>
<comment type="similarity">
    <text evidence="5">Belongs to the PPP phosphatase family. PP-1 subfamily.</text>
</comment>
<proteinExistence type="evidence at protein level"/>
<reference key="1">
    <citation type="journal article" date="1993" name="Plant Mol. Biol.">
        <title>Expression of multiple type 1 phosphoprotein phosphatases in Arabidopsis thaliana.</title>
        <authorList>
            <person name="Smith R.D."/>
            <person name="Walker J.C."/>
        </authorList>
    </citation>
    <scope>NUCLEOTIDE SEQUENCE [MRNA]</scope>
</reference>
<reference key="2">
    <citation type="journal article" date="2000" name="Nature">
        <title>Sequence and analysis of chromosome 3 of the plant Arabidopsis thaliana.</title>
        <authorList>
            <person name="Salanoubat M."/>
            <person name="Lemcke K."/>
            <person name="Rieger M."/>
            <person name="Ansorge W."/>
            <person name="Unseld M."/>
            <person name="Fartmann B."/>
            <person name="Valle G."/>
            <person name="Bloecker H."/>
            <person name="Perez-Alonso M."/>
            <person name="Obermaier B."/>
            <person name="Delseny M."/>
            <person name="Boutry M."/>
            <person name="Grivell L.A."/>
            <person name="Mache R."/>
            <person name="Puigdomenech P."/>
            <person name="De Simone V."/>
            <person name="Choisne N."/>
            <person name="Artiguenave F."/>
            <person name="Robert C."/>
            <person name="Brottier P."/>
            <person name="Wincker P."/>
            <person name="Cattolico L."/>
            <person name="Weissenbach J."/>
            <person name="Saurin W."/>
            <person name="Quetier F."/>
            <person name="Schaefer M."/>
            <person name="Mueller-Auer S."/>
            <person name="Gabel C."/>
            <person name="Fuchs M."/>
            <person name="Benes V."/>
            <person name="Wurmbach E."/>
            <person name="Drzonek H."/>
            <person name="Erfle H."/>
            <person name="Jordan N."/>
            <person name="Bangert S."/>
            <person name="Wiedelmann R."/>
            <person name="Kranz H."/>
            <person name="Voss H."/>
            <person name="Holland R."/>
            <person name="Brandt P."/>
            <person name="Nyakatura G."/>
            <person name="Vezzi A."/>
            <person name="D'Angelo M."/>
            <person name="Pallavicini A."/>
            <person name="Toppo S."/>
            <person name="Simionati B."/>
            <person name="Conrad A."/>
            <person name="Hornischer K."/>
            <person name="Kauer G."/>
            <person name="Loehnert T.-H."/>
            <person name="Nordsiek G."/>
            <person name="Reichelt J."/>
            <person name="Scharfe M."/>
            <person name="Schoen O."/>
            <person name="Bargues M."/>
            <person name="Terol J."/>
            <person name="Climent J."/>
            <person name="Navarro P."/>
            <person name="Collado C."/>
            <person name="Perez-Perez A."/>
            <person name="Ottenwaelder B."/>
            <person name="Duchemin D."/>
            <person name="Cooke R."/>
            <person name="Laudie M."/>
            <person name="Berger-Llauro C."/>
            <person name="Purnelle B."/>
            <person name="Masuy D."/>
            <person name="de Haan M."/>
            <person name="Maarse A.C."/>
            <person name="Alcaraz J.-P."/>
            <person name="Cottet A."/>
            <person name="Casacuberta E."/>
            <person name="Monfort A."/>
            <person name="Argiriou A."/>
            <person name="Flores M."/>
            <person name="Liguori R."/>
            <person name="Vitale D."/>
            <person name="Mannhaupt G."/>
            <person name="Haase D."/>
            <person name="Schoof H."/>
            <person name="Rudd S."/>
            <person name="Zaccaria P."/>
            <person name="Mewes H.-W."/>
            <person name="Mayer K.F.X."/>
            <person name="Kaul S."/>
            <person name="Town C.D."/>
            <person name="Koo H.L."/>
            <person name="Tallon L.J."/>
            <person name="Jenkins J."/>
            <person name="Rooney T."/>
            <person name="Rizzo M."/>
            <person name="Walts A."/>
            <person name="Utterback T."/>
            <person name="Fujii C.Y."/>
            <person name="Shea T.P."/>
            <person name="Creasy T.H."/>
            <person name="Haas B."/>
            <person name="Maiti R."/>
            <person name="Wu D."/>
            <person name="Peterson J."/>
            <person name="Van Aken S."/>
            <person name="Pai G."/>
            <person name="Militscher J."/>
            <person name="Sellers P."/>
            <person name="Gill J.E."/>
            <person name="Feldblyum T.V."/>
            <person name="Preuss D."/>
            <person name="Lin X."/>
            <person name="Nierman W.C."/>
            <person name="Salzberg S.L."/>
            <person name="White O."/>
            <person name="Venter J.C."/>
            <person name="Fraser C.M."/>
            <person name="Kaneko T."/>
            <person name="Nakamura Y."/>
            <person name="Sato S."/>
            <person name="Kato T."/>
            <person name="Asamizu E."/>
            <person name="Sasamoto S."/>
            <person name="Kimura T."/>
            <person name="Idesawa K."/>
            <person name="Kawashima K."/>
            <person name="Kishida Y."/>
            <person name="Kiyokawa C."/>
            <person name="Kohara M."/>
            <person name="Matsumoto M."/>
            <person name="Matsuno A."/>
            <person name="Muraki A."/>
            <person name="Nakayama S."/>
            <person name="Nakazaki N."/>
            <person name="Shinpo S."/>
            <person name="Takeuchi C."/>
            <person name="Wada T."/>
            <person name="Watanabe A."/>
            <person name="Yamada M."/>
            <person name="Yasuda M."/>
            <person name="Tabata S."/>
        </authorList>
    </citation>
    <scope>NUCLEOTIDE SEQUENCE [LARGE SCALE GENOMIC DNA]</scope>
    <source>
        <strain>cv. Columbia</strain>
    </source>
</reference>
<reference key="3">
    <citation type="journal article" date="2017" name="Plant J.">
        <title>Araport11: a complete reannotation of the Arabidopsis thaliana reference genome.</title>
        <authorList>
            <person name="Cheng C.Y."/>
            <person name="Krishnakumar V."/>
            <person name="Chan A.P."/>
            <person name="Thibaud-Nissen F."/>
            <person name="Schobel S."/>
            <person name="Town C.D."/>
        </authorList>
    </citation>
    <scope>GENOME REANNOTATION</scope>
    <source>
        <strain>cv. Columbia</strain>
    </source>
</reference>
<reference key="4">
    <citation type="submission" date="2006-03" db="EMBL/GenBank/DDBJ databases">
        <title>Arabidopsis ORF clones.</title>
        <authorList>
            <person name="Shinn P."/>
            <person name="Chen H."/>
            <person name="Kim C.J."/>
            <person name="Ecker J.R."/>
        </authorList>
    </citation>
    <scope>NUCLEOTIDE SEQUENCE [LARGE SCALE MRNA]</scope>
    <source>
        <strain>cv. Columbia</strain>
    </source>
</reference>
<reference key="5">
    <citation type="submission" date="2006-07" db="EMBL/GenBank/DDBJ databases">
        <title>Large-scale analysis of RIKEN Arabidopsis full-length (RAFL) cDNAs.</title>
        <authorList>
            <person name="Totoki Y."/>
            <person name="Seki M."/>
            <person name="Ishida J."/>
            <person name="Nakajima M."/>
            <person name="Enju A."/>
            <person name="Kamiya A."/>
            <person name="Narusaka M."/>
            <person name="Shin-i T."/>
            <person name="Nakagawa M."/>
            <person name="Sakamoto N."/>
            <person name="Oishi K."/>
            <person name="Kohara Y."/>
            <person name="Kobayashi M."/>
            <person name="Toyoda A."/>
            <person name="Sakaki Y."/>
            <person name="Sakurai T."/>
            <person name="Iida K."/>
            <person name="Akiyama K."/>
            <person name="Satou M."/>
            <person name="Toyoda T."/>
            <person name="Konagaya A."/>
            <person name="Carninci P."/>
            <person name="Kawai J."/>
            <person name="Hayashizaki Y."/>
            <person name="Shinozaki K."/>
        </authorList>
    </citation>
    <scope>NUCLEOTIDE SEQUENCE [LARGE SCALE MRNA]</scope>
    <source>
        <strain>cv. Columbia</strain>
    </source>
</reference>
<reference key="6">
    <citation type="journal article" date="1993" name="Plant J.">
        <title>A protein phosphatase 1 from Arabidopsis thaliana restores temperature sensitivity of a Schizosaccharomyces pombe cdc25ts/wee1-double mutant.</title>
        <authorList>
            <person name="Ferreira P.C.G."/>
            <person name="Hemerly A.S."/>
            <person name="van Montagu M."/>
            <person name="Inze D."/>
        </authorList>
    </citation>
    <scope>NUCLEOTIDE SEQUENCE [MRNA] OF 245-312</scope>
</reference>
<reference key="7">
    <citation type="journal article" date="2007" name="Trends Plant Sci.">
        <title>Arabidopsis PPP family of serine/threonine phosphatases.</title>
        <authorList>
            <person name="Farkas I."/>
            <person name="Dombradi V."/>
            <person name="Miskei M."/>
            <person name="Szabados L."/>
            <person name="Koncz C."/>
        </authorList>
    </citation>
    <scope>GENE FAMILY</scope>
    <scope>NOMENCLATURE</scope>
</reference>
<reference key="8">
    <citation type="journal article" date="2009" name="Plant Physiol.">
        <title>Identification and functional characterization of inhibitor-3, a regulatory subunit of protein phosphatase 1 in plants.</title>
        <authorList>
            <person name="Takemiya A."/>
            <person name="Ariyoshi C."/>
            <person name="Shimazaki K."/>
        </authorList>
    </citation>
    <scope>SUBCELLULAR LOCATION</scope>
</reference>
<reference key="9">
    <citation type="journal article" date="2011" name="Biochem. J.">
        <title>Identification and characterization of AtI-2, an Arabidopsis homologue of an ancient protein phosphatase 1 (PP1) regulatory subunit.</title>
        <authorList>
            <person name="Templeton G.W."/>
            <person name="Nimick M."/>
            <person name="Morrice N."/>
            <person name="Campbell D."/>
            <person name="Goudreault M."/>
            <person name="Gingras A.C."/>
            <person name="Takemiya A."/>
            <person name="Shimazaki K."/>
            <person name="Moorhead G.B."/>
        </authorList>
    </citation>
    <scope>IDENTIFICATION BY MASS SPECTROMETRY</scope>
    <scope>FUNCTION</scope>
    <scope>CATALYTIC ACTIVITY</scope>
    <scope>ACTIVITY REGULATION</scope>
</reference>
<reference key="10">
    <citation type="journal article" date="2012" name="Mol. Cell. Proteomics">
        <title>Comparative large-scale characterisation of plant vs. mammal proteins reveals similar and idiosyncratic N-alpha acetylation features.</title>
        <authorList>
            <person name="Bienvenut W.V."/>
            <person name="Sumpton D."/>
            <person name="Martinez A."/>
            <person name="Lilla S."/>
            <person name="Espagne C."/>
            <person name="Meinnel T."/>
            <person name="Giglione C."/>
        </authorList>
    </citation>
    <scope>ACETYLATION [LARGE SCALE ANALYSIS] AT ALA-2</scope>
    <scope>CLEAVAGE OF INITIATOR METHIONINE [LARGE SCALE ANALYSIS]</scope>
    <scope>IDENTIFICATION BY MASS SPECTROMETRY [LARGE SCALE ANALYSIS]</scope>
</reference>
<organism>
    <name type="scientific">Arabidopsis thaliana</name>
    <name type="common">Mouse-ear cress</name>
    <dbReference type="NCBI Taxonomy" id="3702"/>
    <lineage>
        <taxon>Eukaryota</taxon>
        <taxon>Viridiplantae</taxon>
        <taxon>Streptophyta</taxon>
        <taxon>Embryophyta</taxon>
        <taxon>Tracheophyta</taxon>
        <taxon>Spermatophyta</taxon>
        <taxon>Magnoliopsida</taxon>
        <taxon>eudicotyledons</taxon>
        <taxon>Gunneridae</taxon>
        <taxon>Pentapetalae</taxon>
        <taxon>rosids</taxon>
        <taxon>malvids</taxon>
        <taxon>Brassicales</taxon>
        <taxon>Brassicaceae</taxon>
        <taxon>Camelineae</taxon>
        <taxon>Arabidopsis</taxon>
    </lineage>
</organism>
<protein>
    <recommendedName>
        <fullName evidence="5">Serine/threonine-protein phosphatase PP1 isozyme 5</fullName>
        <ecNumber evidence="3">3.1.3.16</ecNumber>
    </recommendedName>
    <alternativeName>
        <fullName evidence="4">Type one protein phosphatase 5</fullName>
    </alternativeName>
</protein>
<accession>P48485</accession>
<accession>Q29Q41</accession>
<accession>Q570F3</accession>
<feature type="initiator methionine" description="Removed" evidence="8">
    <location>
        <position position="1"/>
    </location>
</feature>
<feature type="chain" id="PRO_0000058801" description="Serine/threonine-protein phosphatase PP1 isozyme 5">
    <location>
        <begin position="2"/>
        <end position="312"/>
    </location>
</feature>
<feature type="active site" description="Proton donor" evidence="1">
    <location>
        <position position="131"/>
    </location>
</feature>
<feature type="binding site" evidence="1">
    <location>
        <position position="70"/>
    </location>
    <ligand>
        <name>Mn(2+)</name>
        <dbReference type="ChEBI" id="CHEBI:29035"/>
        <label>1</label>
    </ligand>
</feature>
<feature type="binding site" evidence="1">
    <location>
        <position position="72"/>
    </location>
    <ligand>
        <name>Mn(2+)</name>
        <dbReference type="ChEBI" id="CHEBI:29035"/>
        <label>1</label>
    </ligand>
</feature>
<feature type="binding site" evidence="1">
    <location>
        <position position="98"/>
    </location>
    <ligand>
        <name>Mn(2+)</name>
        <dbReference type="ChEBI" id="CHEBI:29035"/>
        <label>1</label>
    </ligand>
</feature>
<feature type="binding site" evidence="1">
    <location>
        <position position="98"/>
    </location>
    <ligand>
        <name>Mn(2+)</name>
        <dbReference type="ChEBI" id="CHEBI:29035"/>
        <label>2</label>
    </ligand>
</feature>
<feature type="binding site" evidence="1">
    <location>
        <position position="130"/>
    </location>
    <ligand>
        <name>Mn(2+)</name>
        <dbReference type="ChEBI" id="CHEBI:29035"/>
        <label>2</label>
    </ligand>
</feature>
<feature type="binding site" evidence="1">
    <location>
        <position position="179"/>
    </location>
    <ligand>
        <name>Mn(2+)</name>
        <dbReference type="ChEBI" id="CHEBI:29035"/>
        <label>2</label>
    </ligand>
</feature>
<feature type="binding site" evidence="1">
    <location>
        <position position="254"/>
    </location>
    <ligand>
        <name>Mn(2+)</name>
        <dbReference type="ChEBI" id="CHEBI:29035"/>
        <label>2</label>
    </ligand>
</feature>
<feature type="modified residue" description="N-acetylalanine" evidence="8">
    <location>
        <position position="2"/>
    </location>
</feature>
<feature type="sequence conflict" description="In Ref. 6; CAA78152." evidence="5" ref="6">
    <original>ND</original>
    <variation>IP</variation>
    <location>
        <begin position="245"/>
        <end position="246"/>
    </location>
</feature>
<feature type="sequence conflict" description="In Ref. 6; CAA78152." evidence="5" ref="6">
    <original>L</original>
    <variation>M</variation>
    <location>
        <position position="288"/>
    </location>
</feature>
<keyword id="KW-0007">Acetylation</keyword>
<keyword id="KW-0963">Cytoplasm</keyword>
<keyword id="KW-0378">Hydrolase</keyword>
<keyword id="KW-0464">Manganese</keyword>
<keyword id="KW-0479">Metal-binding</keyword>
<keyword id="KW-0539">Nucleus</keyword>
<keyword id="KW-0904">Protein phosphatase</keyword>
<keyword id="KW-1185">Reference proteome</keyword>